<proteinExistence type="evidence at protein level"/>
<feature type="chain" id="PRO_0000353190" description="Anoctamin-4">
    <location>
        <begin position="1"/>
        <end position="955"/>
    </location>
</feature>
<feature type="topological domain" description="Cytoplasmic" evidence="2">
    <location>
        <begin position="1"/>
        <end position="352"/>
    </location>
</feature>
<feature type="transmembrane region" description="Helical" evidence="2">
    <location>
        <begin position="353"/>
        <end position="373"/>
    </location>
</feature>
<feature type="topological domain" description="Extracellular" evidence="2">
    <location>
        <begin position="374"/>
        <end position="424"/>
    </location>
</feature>
<feature type="transmembrane region" description="Helical" evidence="2">
    <location>
        <begin position="425"/>
        <end position="445"/>
    </location>
</feature>
<feature type="topological domain" description="Cytoplasmic" evidence="2">
    <location>
        <begin position="446"/>
        <end position="505"/>
    </location>
</feature>
<feature type="transmembrane region" description="Helical" evidence="2">
    <location>
        <begin position="506"/>
        <end position="526"/>
    </location>
</feature>
<feature type="topological domain" description="Extracellular" evidence="2">
    <location>
        <begin position="527"/>
        <end position="547"/>
    </location>
</feature>
<feature type="transmembrane region" description="Helical" evidence="2">
    <location>
        <begin position="548"/>
        <end position="568"/>
    </location>
</feature>
<feature type="topological domain" description="Cytoplasmic" evidence="2">
    <location>
        <begin position="569"/>
        <end position="595"/>
    </location>
</feature>
<feature type="transmembrane region" description="Helical" evidence="2">
    <location>
        <begin position="596"/>
        <end position="616"/>
    </location>
</feature>
<feature type="topological domain" description="Extracellular" evidence="2">
    <location>
        <begin position="617"/>
        <end position="715"/>
    </location>
</feature>
<feature type="transmembrane region" description="Helical" evidence="2">
    <location>
        <begin position="716"/>
        <end position="736"/>
    </location>
</feature>
<feature type="topological domain" description="Cytoplasmic" evidence="2">
    <location>
        <begin position="737"/>
        <end position="768"/>
    </location>
</feature>
<feature type="transmembrane region" description="Helical" evidence="2">
    <location>
        <begin position="769"/>
        <end position="789"/>
    </location>
</feature>
<feature type="topological domain" description="Extracellular" evidence="2">
    <location>
        <begin position="790"/>
        <end position="885"/>
    </location>
</feature>
<feature type="transmembrane region" description="Helical" evidence="2">
    <location>
        <begin position="886"/>
        <end position="906"/>
    </location>
</feature>
<feature type="topological domain" description="Cytoplasmic" evidence="2">
    <location>
        <begin position="907"/>
        <end position="955"/>
    </location>
</feature>
<feature type="region of interest" description="Disordered" evidence="3">
    <location>
        <begin position="73"/>
        <end position="97"/>
    </location>
</feature>
<feature type="glycosylation site" description="N-linked (GlcNAc...) asparagine" evidence="2">
    <location>
        <position position="544"/>
    </location>
</feature>
<feature type="glycosylation site" description="N-linked (GlcNAc...) asparagine" evidence="2">
    <location>
        <position position="824"/>
    </location>
</feature>
<feature type="glycosylation site" description="N-linked (GlcNAc...) asparagine" evidence="2">
    <location>
        <position position="837"/>
    </location>
</feature>
<feature type="splice variant" id="VSP_052960" description="In isoform 3." evidence="8">
    <original>H</original>
    <variation>Q</variation>
    <location>
        <position position="245"/>
    </location>
</feature>
<feature type="splice variant" id="VSP_052961" description="In isoform 3." evidence="8">
    <location>
        <begin position="246"/>
        <end position="955"/>
    </location>
</feature>
<feature type="splice variant" id="VSP_052962" description="In isoform 2." evidence="8">
    <original>AT</original>
    <variation>GK</variation>
    <location>
        <begin position="438"/>
        <end position="439"/>
    </location>
</feature>
<feature type="splice variant" id="VSP_052963" description="In isoform 2." evidence="8">
    <location>
        <begin position="440"/>
        <end position="955"/>
    </location>
</feature>
<feature type="sequence conflict" description="In Ref. 1; BAC30429." evidence="9" ref="1">
    <original>P</original>
    <variation>H</variation>
    <location>
        <position position="214"/>
    </location>
</feature>
<sequence>MEASSSGITNGKNKVFHAEGGLDLQSHQLDMQILPDGPKSDVDFSEILNAIQEMAKDVNILFDELEAVNSPCKDDDSLLHPGNLTSTSEDTSRLEAGGETVRERNKSNGLYFRDGKCRIDYILVYRKSNPQTEKREVFERNIRAEGLQMEKESSLINSDIIFVKLHAPWEVLGRYAEQMNVRMPFRRKIYYLPRRYKFMSRIDKQISRFRRWLPKKPMRLDKETLPDLEENDCYTAPFSQQRIHHFIIHNKDTFFNNATRSRIVHHILQRIKYEEGKNKIGLNRLLTNGSYEAAFPLHEGSYRSKNSIKTHGAVNHRHLLYECWASWGVWYKYQPLDLVRRYFGEKIGLYFAWLGWYTGMLFPAAFIGLFVFLYGVTTLDHCQVSKEVCQATDIIMCPVCDKYCPFMRLSDSCVYAKVTHLFDNGATVFFAVFMAVWATVFLEFWKRRRAVIAYDWDLIDWEEEEEEIRPQFEAKYSKKERMNPISGKPEPYQAFTDKCSRLIVSASGIFFMICVVIAAVFGIVIYRVVTVSTFAAFKWALIRNNSQVATTGTAVCINFCIIMLLNVLYEKVALLLTNLEQPRTESEWENSFTLKMFLFQFVNLNSSTFYIAFFLGRFTGHPGAYLRLINRWRLEECHPSGCLIDLCMQMGIIMVLKQTWNNFMELGYPLIQNWWTRRKVRQEHGTERKINFPQWEKDYNLQPMNAYGLFDEYLEMILQFGFTTIFVAAFPLAPLLALLNNIIEIRLDAYKFVTQWRRPLASRAKDIGIWYGILEGIGILSVITNAFVIAITSDFIPRLVYAYKYGPCAGQGEAGQKCMVGYVNASLSVFRISDFENRSEPESDGSEFSGTPLKYCRYRDYRDPPHSLAPYGYTLQFWHVLAARLAFIIVFEHLVFCIKHLISYLIPDLPKDLRDRMRREKYLIQEMMYEAELERLQKERKERKKNGKAHHNEWP</sequence>
<organism>
    <name type="scientific">Mus musculus</name>
    <name type="common">Mouse</name>
    <dbReference type="NCBI Taxonomy" id="10090"/>
    <lineage>
        <taxon>Eukaryota</taxon>
        <taxon>Metazoa</taxon>
        <taxon>Chordata</taxon>
        <taxon>Craniata</taxon>
        <taxon>Vertebrata</taxon>
        <taxon>Euteleostomi</taxon>
        <taxon>Mammalia</taxon>
        <taxon>Eutheria</taxon>
        <taxon>Euarchontoglires</taxon>
        <taxon>Glires</taxon>
        <taxon>Rodentia</taxon>
        <taxon>Myomorpha</taxon>
        <taxon>Muroidea</taxon>
        <taxon>Muridae</taxon>
        <taxon>Murinae</taxon>
        <taxon>Mus</taxon>
        <taxon>Mus</taxon>
    </lineage>
</organism>
<comment type="function">
    <text evidence="6 7">Has calcium-dependent phospholipid scramblase activity; scrambles phosphatidylserine, phosphatidylcholine and galactosylceramide (PubMed:23532839). Does not exhibit calcium-activated chloride channel (CaCC) activity (PubMed:22075693).</text>
</comment>
<comment type="catalytic activity">
    <reaction evidence="7">
        <text>a 1,2-diacyl-sn-glycero-3-phospho-L-serine(in) = a 1,2-diacyl-sn-glycero-3-phospho-L-serine(out)</text>
        <dbReference type="Rhea" id="RHEA:38663"/>
        <dbReference type="ChEBI" id="CHEBI:57262"/>
    </reaction>
    <physiologicalReaction direction="left-to-right" evidence="10">
        <dbReference type="Rhea" id="RHEA:38664"/>
    </physiologicalReaction>
</comment>
<comment type="catalytic activity">
    <reaction evidence="7">
        <text>a beta-D-galactosyl-(1&lt;-&gt;1')-N-acylsphing-4-enine(out) = a beta-D-galactosyl-(1&lt;-&gt;1')-N-acylsphing-4-enine(in)</text>
        <dbReference type="Rhea" id="RHEA:38899"/>
        <dbReference type="ChEBI" id="CHEBI:18390"/>
    </reaction>
    <physiologicalReaction direction="left-to-right" evidence="10">
        <dbReference type="Rhea" id="RHEA:38900"/>
    </physiologicalReaction>
</comment>
<comment type="catalytic activity">
    <reaction evidence="7">
        <text>a 1,2-diacyl-sn-glycero-3-phosphocholine(in) = a 1,2-diacyl-sn-glycero-3-phosphocholine(out)</text>
        <dbReference type="Rhea" id="RHEA:38571"/>
        <dbReference type="ChEBI" id="CHEBI:57643"/>
    </reaction>
    <physiologicalReaction direction="right-to-left" evidence="10">
        <dbReference type="Rhea" id="RHEA:38573"/>
    </physiologicalReaction>
</comment>
<comment type="subcellular location">
    <subcellularLocation>
        <location evidence="1">Cell membrane</location>
        <topology evidence="1">Multi-pass membrane protein</topology>
    </subcellularLocation>
    <text evidence="6">Shows an intracellular localization according to PubMed:22075693.</text>
</comment>
<comment type="alternative products">
    <event type="alternative splicing"/>
    <isoform>
        <id>Q8C5H1-1</id>
        <name>1</name>
        <sequence type="displayed"/>
    </isoform>
    <isoform>
        <id>Q8C5H1-2</id>
        <name evidence="4">2</name>
        <sequence type="described" ref="VSP_052962 VSP_052963"/>
    </isoform>
    <isoform>
        <id>Q8C5H1-3</id>
        <name evidence="4">3</name>
        <sequence type="described" ref="VSP_052960 VSP_052961"/>
    </isoform>
</comment>
<comment type="tissue specificity">
    <text evidence="5 7">Predominantly expressed in neuronal tissues. Expressed at low levels in ovary, uterus, heart and brain.</text>
</comment>
<comment type="miscellaneous">
    <text>The term 'anoctamin' was coined because these channels are anion selective and have eight (OCT) transmembrane segments. There is some dissatisfaction in the field with the Ano nomenclature because it is not certain that all the members of this family are anion channels or have the 8-transmembrane topology.</text>
</comment>
<comment type="miscellaneous">
    <molecule>Isoform 2</molecule>
    <text evidence="9">May be due to an intron retention.</text>
</comment>
<comment type="similarity">
    <text evidence="1">Belongs to the anoctamin family.</text>
</comment>
<protein>
    <recommendedName>
        <fullName evidence="1">Anoctamin-4</fullName>
    </recommendedName>
    <alternativeName>
        <fullName evidence="1">Transmembrane protein 16D</fullName>
    </alternativeName>
</protein>
<keyword id="KW-0025">Alternative splicing</keyword>
<keyword id="KW-1003">Cell membrane</keyword>
<keyword id="KW-0325">Glycoprotein</keyword>
<keyword id="KW-0445">Lipid transport</keyword>
<keyword id="KW-0472">Membrane</keyword>
<keyword id="KW-1185">Reference proteome</keyword>
<keyword id="KW-0812">Transmembrane</keyword>
<keyword id="KW-1133">Transmembrane helix</keyword>
<keyword id="KW-0813">Transport</keyword>
<dbReference type="EMBL" id="AK039728">
    <property type="protein sequence ID" value="BAC30429.1"/>
    <property type="molecule type" value="mRNA"/>
</dbReference>
<dbReference type="EMBL" id="AK078364">
    <property type="protein sequence ID" value="BAC37238.1"/>
    <property type="molecule type" value="mRNA"/>
</dbReference>
<dbReference type="EMBL" id="AC124504">
    <property type="status" value="NOT_ANNOTATED_CDS"/>
    <property type="molecule type" value="Genomic_DNA"/>
</dbReference>
<dbReference type="EMBL" id="AC132383">
    <property type="status" value="NOT_ANNOTATED_CDS"/>
    <property type="molecule type" value="Genomic_DNA"/>
</dbReference>
<dbReference type="CCDS" id="CCDS24114.2">
    <molecule id="Q8C5H1-1"/>
</dbReference>
<dbReference type="RefSeq" id="NP_001264117.1">
    <molecule id="Q8C5H1-1"/>
    <property type="nucleotide sequence ID" value="NM_001277188.1"/>
</dbReference>
<dbReference type="RefSeq" id="XP_006513821.1">
    <property type="nucleotide sequence ID" value="XM_006513758.3"/>
</dbReference>
<dbReference type="RefSeq" id="XP_030100983.1">
    <molecule id="Q8C5H1-1"/>
    <property type="nucleotide sequence ID" value="XM_030245123.2"/>
</dbReference>
<dbReference type="SMR" id="Q8C5H1"/>
<dbReference type="FunCoup" id="Q8C5H1">
    <property type="interactions" value="477"/>
</dbReference>
<dbReference type="STRING" id="10090.ENSMUSP00000138193"/>
<dbReference type="SwissLipids" id="SLP:000000374"/>
<dbReference type="GlyCosmos" id="Q8C5H1">
    <property type="glycosylation" value="3 sites, No reported glycans"/>
</dbReference>
<dbReference type="GlyGen" id="Q8C5H1">
    <property type="glycosylation" value="4 sites, 1 N-linked glycan (1 site)"/>
</dbReference>
<dbReference type="PhosphoSitePlus" id="Q8C5H1"/>
<dbReference type="ProteomicsDB" id="282110">
    <molecule id="Q8C5H1-1"/>
</dbReference>
<dbReference type="ProteomicsDB" id="282111">
    <molecule id="Q8C5H1-2"/>
</dbReference>
<dbReference type="ProteomicsDB" id="282112">
    <molecule id="Q8C5H1-3"/>
</dbReference>
<dbReference type="Antibodypedia" id="66428">
    <property type="antibodies" value="88 antibodies from 13 providers"/>
</dbReference>
<dbReference type="DNASU" id="320091"/>
<dbReference type="Ensembl" id="ENSMUST00000181976.8">
    <molecule id="Q8C5H1-3"/>
    <property type="protein sequence ID" value="ENSMUSP00000138792.2"/>
    <property type="gene ID" value="ENSMUSG00000035189.18"/>
</dbReference>
<dbReference type="Ensembl" id="ENSMUST00000182341.8">
    <molecule id="Q8C5H1-1"/>
    <property type="protein sequence ID" value="ENSMUSP00000138193.2"/>
    <property type="gene ID" value="ENSMUSG00000035189.18"/>
</dbReference>
<dbReference type="GeneID" id="320091"/>
<dbReference type="KEGG" id="mmu:320091"/>
<dbReference type="UCSC" id="uc007gsa.1">
    <molecule id="Q8C5H1-1"/>
    <property type="organism name" value="mouse"/>
</dbReference>
<dbReference type="UCSC" id="uc007gsb.1">
    <molecule id="Q8C5H1-2"/>
    <property type="organism name" value="mouse"/>
</dbReference>
<dbReference type="UCSC" id="uc007gsc.1">
    <molecule id="Q8C5H1-3"/>
    <property type="organism name" value="mouse"/>
</dbReference>
<dbReference type="AGR" id="MGI:2443344"/>
<dbReference type="CTD" id="121601"/>
<dbReference type="MGI" id="MGI:2443344">
    <property type="gene designation" value="Ano4"/>
</dbReference>
<dbReference type="VEuPathDB" id="HostDB:ENSMUSG00000035189"/>
<dbReference type="GeneTree" id="ENSGT00940000158600"/>
<dbReference type="InParanoid" id="Q8C5H1"/>
<dbReference type="OMA" id="SQAFHPL"/>
<dbReference type="OrthoDB" id="296386at2759"/>
<dbReference type="PhylomeDB" id="Q8C5H1"/>
<dbReference type="Reactome" id="R-MMU-2672351">
    <property type="pathway name" value="Stimuli-sensing channels"/>
</dbReference>
<dbReference type="BioGRID-ORCS" id="320091">
    <property type="hits" value="1 hit in 75 CRISPR screens"/>
</dbReference>
<dbReference type="ChiTaRS" id="Ano4">
    <property type="organism name" value="mouse"/>
</dbReference>
<dbReference type="PRO" id="PR:Q8C5H1"/>
<dbReference type="Proteomes" id="UP000000589">
    <property type="component" value="Chromosome 10"/>
</dbReference>
<dbReference type="RNAct" id="Q8C5H1">
    <property type="molecule type" value="protein"/>
</dbReference>
<dbReference type="Bgee" id="ENSMUSG00000035189">
    <property type="expression patterns" value="Expressed in otolith organ and 119 other cell types or tissues"/>
</dbReference>
<dbReference type="ExpressionAtlas" id="Q8C5H1">
    <property type="expression patterns" value="baseline and differential"/>
</dbReference>
<dbReference type="GO" id="GO:0005886">
    <property type="term" value="C:plasma membrane"/>
    <property type="evidence" value="ECO:0007669"/>
    <property type="project" value="UniProtKB-SubCell"/>
</dbReference>
<dbReference type="GO" id="GO:0017128">
    <property type="term" value="F:phospholipid scramblase activity"/>
    <property type="evidence" value="ECO:0000314"/>
    <property type="project" value="MGI"/>
</dbReference>
<dbReference type="GO" id="GO:0046983">
    <property type="term" value="F:protein dimerization activity"/>
    <property type="evidence" value="ECO:0007669"/>
    <property type="project" value="InterPro"/>
</dbReference>
<dbReference type="GO" id="GO:0061591">
    <property type="term" value="P:calcium activated galactosylceramide scrambling"/>
    <property type="evidence" value="ECO:0000314"/>
    <property type="project" value="MGI"/>
</dbReference>
<dbReference type="GO" id="GO:0061590">
    <property type="term" value="P:calcium activated phosphatidylcholine scrambling"/>
    <property type="evidence" value="ECO:0000314"/>
    <property type="project" value="MGI"/>
</dbReference>
<dbReference type="GO" id="GO:0061589">
    <property type="term" value="P:calcium activated phosphatidylserine scrambling"/>
    <property type="evidence" value="ECO:0000314"/>
    <property type="project" value="MGI"/>
</dbReference>
<dbReference type="GO" id="GO:1902476">
    <property type="term" value="P:chloride transmembrane transport"/>
    <property type="evidence" value="ECO:0007669"/>
    <property type="project" value="Ensembl"/>
</dbReference>
<dbReference type="GO" id="GO:0051649">
    <property type="term" value="P:establishment of localization in cell"/>
    <property type="evidence" value="ECO:0000314"/>
    <property type="project" value="MGI"/>
</dbReference>
<dbReference type="InterPro" id="IPR032394">
    <property type="entry name" value="Anoct_dimer"/>
</dbReference>
<dbReference type="InterPro" id="IPR007632">
    <property type="entry name" value="Anoctamin"/>
</dbReference>
<dbReference type="InterPro" id="IPR049452">
    <property type="entry name" value="Anoctamin_TM"/>
</dbReference>
<dbReference type="PANTHER" id="PTHR12308">
    <property type="entry name" value="ANOCTAMIN"/>
    <property type="match status" value="1"/>
</dbReference>
<dbReference type="PANTHER" id="PTHR12308:SF28">
    <property type="entry name" value="ANOCTAMIN-4"/>
    <property type="match status" value="1"/>
</dbReference>
<dbReference type="Pfam" id="PF16178">
    <property type="entry name" value="Anoct_dimer"/>
    <property type="match status" value="1"/>
</dbReference>
<dbReference type="Pfam" id="PF04547">
    <property type="entry name" value="Anoctamin"/>
    <property type="match status" value="1"/>
</dbReference>
<name>ANO4_MOUSE</name>
<evidence type="ECO:0000250" key="1">
    <source>
        <dbReference type="UniProtKB" id="Q32M45"/>
    </source>
</evidence>
<evidence type="ECO:0000255" key="2"/>
<evidence type="ECO:0000256" key="3">
    <source>
        <dbReference type="SAM" id="MobiDB-lite"/>
    </source>
</evidence>
<evidence type="ECO:0000269" key="4">
    <source>
    </source>
</evidence>
<evidence type="ECO:0000269" key="5">
    <source>
    </source>
</evidence>
<evidence type="ECO:0000269" key="6">
    <source>
    </source>
</evidence>
<evidence type="ECO:0000269" key="7">
    <source>
    </source>
</evidence>
<evidence type="ECO:0000303" key="8">
    <source>
    </source>
</evidence>
<evidence type="ECO:0000305" key="9"/>
<evidence type="ECO:0000305" key="10">
    <source>
    </source>
</evidence>
<evidence type="ECO:0000312" key="11">
    <source>
        <dbReference type="EMBL" id="BAC30429.1"/>
    </source>
</evidence>
<evidence type="ECO:0000312" key="12">
    <source>
        <dbReference type="EMBL" id="BAC37238.1"/>
    </source>
</evidence>
<evidence type="ECO:0000312" key="13">
    <source>
        <dbReference type="MGI" id="MGI:2443344"/>
    </source>
</evidence>
<gene>
    <name evidence="1" type="primary">Ano4</name>
    <name evidence="13" type="synonym">Tmem16d</name>
</gene>
<accession>Q8C5H1</accession>
<accession>Q8CA37</accession>
<reference evidence="9 12" key="1">
    <citation type="journal article" date="2005" name="Science">
        <title>The transcriptional landscape of the mammalian genome.</title>
        <authorList>
            <person name="Carninci P."/>
            <person name="Kasukawa T."/>
            <person name="Katayama S."/>
            <person name="Gough J."/>
            <person name="Frith M.C."/>
            <person name="Maeda N."/>
            <person name="Oyama R."/>
            <person name="Ravasi T."/>
            <person name="Lenhard B."/>
            <person name="Wells C."/>
            <person name="Kodzius R."/>
            <person name="Shimokawa K."/>
            <person name="Bajic V.B."/>
            <person name="Brenner S.E."/>
            <person name="Batalov S."/>
            <person name="Forrest A.R."/>
            <person name="Zavolan M."/>
            <person name="Davis M.J."/>
            <person name="Wilming L.G."/>
            <person name="Aidinis V."/>
            <person name="Allen J.E."/>
            <person name="Ambesi-Impiombato A."/>
            <person name="Apweiler R."/>
            <person name="Aturaliya R.N."/>
            <person name="Bailey T.L."/>
            <person name="Bansal M."/>
            <person name="Baxter L."/>
            <person name="Beisel K.W."/>
            <person name="Bersano T."/>
            <person name="Bono H."/>
            <person name="Chalk A.M."/>
            <person name="Chiu K.P."/>
            <person name="Choudhary V."/>
            <person name="Christoffels A."/>
            <person name="Clutterbuck D.R."/>
            <person name="Crowe M.L."/>
            <person name="Dalla E."/>
            <person name="Dalrymple B.P."/>
            <person name="de Bono B."/>
            <person name="Della Gatta G."/>
            <person name="di Bernardo D."/>
            <person name="Down T."/>
            <person name="Engstrom P."/>
            <person name="Fagiolini M."/>
            <person name="Faulkner G."/>
            <person name="Fletcher C.F."/>
            <person name="Fukushima T."/>
            <person name="Furuno M."/>
            <person name="Futaki S."/>
            <person name="Gariboldi M."/>
            <person name="Georgii-Hemming P."/>
            <person name="Gingeras T.R."/>
            <person name="Gojobori T."/>
            <person name="Green R.E."/>
            <person name="Gustincich S."/>
            <person name="Harbers M."/>
            <person name="Hayashi Y."/>
            <person name="Hensch T.K."/>
            <person name="Hirokawa N."/>
            <person name="Hill D."/>
            <person name="Huminiecki L."/>
            <person name="Iacono M."/>
            <person name="Ikeo K."/>
            <person name="Iwama A."/>
            <person name="Ishikawa T."/>
            <person name="Jakt M."/>
            <person name="Kanapin A."/>
            <person name="Katoh M."/>
            <person name="Kawasawa Y."/>
            <person name="Kelso J."/>
            <person name="Kitamura H."/>
            <person name="Kitano H."/>
            <person name="Kollias G."/>
            <person name="Krishnan S.P."/>
            <person name="Kruger A."/>
            <person name="Kummerfeld S.K."/>
            <person name="Kurochkin I.V."/>
            <person name="Lareau L.F."/>
            <person name="Lazarevic D."/>
            <person name="Lipovich L."/>
            <person name="Liu J."/>
            <person name="Liuni S."/>
            <person name="McWilliam S."/>
            <person name="Madan Babu M."/>
            <person name="Madera M."/>
            <person name="Marchionni L."/>
            <person name="Matsuda H."/>
            <person name="Matsuzawa S."/>
            <person name="Miki H."/>
            <person name="Mignone F."/>
            <person name="Miyake S."/>
            <person name="Morris K."/>
            <person name="Mottagui-Tabar S."/>
            <person name="Mulder N."/>
            <person name="Nakano N."/>
            <person name="Nakauchi H."/>
            <person name="Ng P."/>
            <person name="Nilsson R."/>
            <person name="Nishiguchi S."/>
            <person name="Nishikawa S."/>
            <person name="Nori F."/>
            <person name="Ohara O."/>
            <person name="Okazaki Y."/>
            <person name="Orlando V."/>
            <person name="Pang K.C."/>
            <person name="Pavan W.J."/>
            <person name="Pavesi G."/>
            <person name="Pesole G."/>
            <person name="Petrovsky N."/>
            <person name="Piazza S."/>
            <person name="Reed J."/>
            <person name="Reid J.F."/>
            <person name="Ring B.Z."/>
            <person name="Ringwald M."/>
            <person name="Rost B."/>
            <person name="Ruan Y."/>
            <person name="Salzberg S.L."/>
            <person name="Sandelin A."/>
            <person name="Schneider C."/>
            <person name="Schoenbach C."/>
            <person name="Sekiguchi K."/>
            <person name="Semple C.A."/>
            <person name="Seno S."/>
            <person name="Sessa L."/>
            <person name="Sheng Y."/>
            <person name="Shibata Y."/>
            <person name="Shimada H."/>
            <person name="Shimada K."/>
            <person name="Silva D."/>
            <person name="Sinclair B."/>
            <person name="Sperling S."/>
            <person name="Stupka E."/>
            <person name="Sugiura K."/>
            <person name="Sultana R."/>
            <person name="Takenaka Y."/>
            <person name="Taki K."/>
            <person name="Tammoja K."/>
            <person name="Tan S.L."/>
            <person name="Tang S."/>
            <person name="Taylor M.S."/>
            <person name="Tegner J."/>
            <person name="Teichmann S.A."/>
            <person name="Ueda H.R."/>
            <person name="van Nimwegen E."/>
            <person name="Verardo R."/>
            <person name="Wei C.L."/>
            <person name="Yagi K."/>
            <person name="Yamanishi H."/>
            <person name="Zabarovsky E."/>
            <person name="Zhu S."/>
            <person name="Zimmer A."/>
            <person name="Hide W."/>
            <person name="Bult C."/>
            <person name="Grimmond S.M."/>
            <person name="Teasdale R.D."/>
            <person name="Liu E.T."/>
            <person name="Brusic V."/>
            <person name="Quackenbush J."/>
            <person name="Wahlestedt C."/>
            <person name="Mattick J.S."/>
            <person name="Hume D.A."/>
            <person name="Kai C."/>
            <person name="Sasaki D."/>
            <person name="Tomaru Y."/>
            <person name="Fukuda S."/>
            <person name="Kanamori-Katayama M."/>
            <person name="Suzuki M."/>
            <person name="Aoki J."/>
            <person name="Arakawa T."/>
            <person name="Iida J."/>
            <person name="Imamura K."/>
            <person name="Itoh M."/>
            <person name="Kato T."/>
            <person name="Kawaji H."/>
            <person name="Kawagashira N."/>
            <person name="Kawashima T."/>
            <person name="Kojima M."/>
            <person name="Kondo S."/>
            <person name="Konno H."/>
            <person name="Nakano K."/>
            <person name="Ninomiya N."/>
            <person name="Nishio T."/>
            <person name="Okada M."/>
            <person name="Plessy C."/>
            <person name="Shibata K."/>
            <person name="Shiraki T."/>
            <person name="Suzuki S."/>
            <person name="Tagami M."/>
            <person name="Waki K."/>
            <person name="Watahiki A."/>
            <person name="Okamura-Oho Y."/>
            <person name="Suzuki H."/>
            <person name="Kawai J."/>
            <person name="Hayashizaki Y."/>
        </authorList>
    </citation>
    <scope>NUCLEOTIDE SEQUENCE [LARGE SCALE MRNA] (ISOFORMS 2 AND 3)</scope>
    <source>
        <strain evidence="12">C57BL/6J</strain>
        <tissue evidence="12">Cerebellum</tissue>
        <tissue evidence="11">Spinal cord</tissue>
    </source>
</reference>
<reference key="2">
    <citation type="journal article" date="2009" name="PLoS Biol.">
        <title>Lineage-specific biology revealed by a finished genome assembly of the mouse.</title>
        <authorList>
            <person name="Church D.M."/>
            <person name="Goodstadt L."/>
            <person name="Hillier L.W."/>
            <person name="Zody M.C."/>
            <person name="Goldstein S."/>
            <person name="She X."/>
            <person name="Bult C.J."/>
            <person name="Agarwala R."/>
            <person name="Cherry J.L."/>
            <person name="DiCuccio M."/>
            <person name="Hlavina W."/>
            <person name="Kapustin Y."/>
            <person name="Meric P."/>
            <person name="Maglott D."/>
            <person name="Birtle Z."/>
            <person name="Marques A.C."/>
            <person name="Graves T."/>
            <person name="Zhou S."/>
            <person name="Teague B."/>
            <person name="Potamousis K."/>
            <person name="Churas C."/>
            <person name="Place M."/>
            <person name="Herschleb J."/>
            <person name="Runnheim R."/>
            <person name="Forrest D."/>
            <person name="Amos-Landgraf J."/>
            <person name="Schwartz D.C."/>
            <person name="Cheng Z."/>
            <person name="Lindblad-Toh K."/>
            <person name="Eichler E.E."/>
            <person name="Ponting C.P."/>
        </authorList>
    </citation>
    <scope>NUCLEOTIDE SEQUENCE [LARGE SCALE GENOMIC DNA]</scope>
    <source>
        <strain>C57BL/6J</strain>
    </source>
</reference>
<reference key="3">
    <citation type="journal article" date="2010" name="J. Biol. Chem.">
        <title>Expression and function of epithelial anoctamins.</title>
        <authorList>
            <person name="Schreiber R."/>
            <person name="Uliyakina I."/>
            <person name="Kongsuphol P."/>
            <person name="Warth R."/>
            <person name="Mirza M."/>
            <person name="Martins J.R."/>
            <person name="Kunzelmann K."/>
        </authorList>
    </citation>
    <scope>TISSUE SPECIFICITY</scope>
</reference>
<reference key="4">
    <citation type="journal article" date="2012" name="Am. J. Physiol.">
        <title>ANOs 3-7 in the anoctamin/Tmem16 Cl- channel family are intracellular proteins.</title>
        <authorList>
            <person name="Duran C."/>
            <person name="Qu Z."/>
            <person name="Osunkoya A.O."/>
            <person name="Cui Y."/>
            <person name="Hartzell H.C."/>
        </authorList>
    </citation>
    <scope>ABSENCE OF CALCIUM-ACTIVATED CHLORIDE CHANNEL ACTIVITY</scope>
    <scope>SUBCELLULAR LOCATION</scope>
</reference>
<reference key="5">
    <citation type="journal article" date="2012" name="Exp. Physiol.">
        <title>The anoctamin (TMEM16) gene family: calcium-activated chloride channels come of age.</title>
        <authorList>
            <person name="Winpenny J.P."/>
            <person name="Gray M.A."/>
        </authorList>
    </citation>
    <scope>REVIEW</scope>
</reference>
<reference key="6">
    <citation type="journal article" date="2013" name="J. Biol. Chem.">
        <title>Calcium-dependent phospholipid scramblase activity of TMEM16 protein family members.</title>
        <authorList>
            <person name="Suzuki J."/>
            <person name="Fujii T."/>
            <person name="Imao T."/>
            <person name="Ishihara K."/>
            <person name="Kuba H."/>
            <person name="Nagata S."/>
        </authorList>
    </citation>
    <scope>FUNCTION</scope>
    <scope>CATALYTIC ACTIVITY</scope>
    <scope>TISSUE SPECIFICITY</scope>
</reference>